<comment type="function">
    <text evidence="1">Binds directly to 16S ribosomal RNA.</text>
</comment>
<comment type="similarity">
    <text evidence="1">Belongs to the bacterial ribosomal protein bS20 family.</text>
</comment>
<name>RS20_SHEB2</name>
<keyword id="KW-0687">Ribonucleoprotein</keyword>
<keyword id="KW-0689">Ribosomal protein</keyword>
<keyword id="KW-0694">RNA-binding</keyword>
<keyword id="KW-0699">rRNA-binding</keyword>
<dbReference type="EMBL" id="CP001252">
    <property type="protein sequence ID" value="ACK47722.1"/>
    <property type="molecule type" value="Genomic_DNA"/>
</dbReference>
<dbReference type="RefSeq" id="WP_006080633.1">
    <property type="nucleotide sequence ID" value="NC_011663.1"/>
</dbReference>
<dbReference type="SMR" id="B8EFD0"/>
<dbReference type="GeneID" id="11771433"/>
<dbReference type="KEGG" id="sbp:Sbal223_3238"/>
<dbReference type="HOGENOM" id="CLU_160655_4_0_6"/>
<dbReference type="Proteomes" id="UP000002507">
    <property type="component" value="Chromosome"/>
</dbReference>
<dbReference type="GO" id="GO:0005829">
    <property type="term" value="C:cytosol"/>
    <property type="evidence" value="ECO:0007669"/>
    <property type="project" value="TreeGrafter"/>
</dbReference>
<dbReference type="GO" id="GO:0015935">
    <property type="term" value="C:small ribosomal subunit"/>
    <property type="evidence" value="ECO:0007669"/>
    <property type="project" value="TreeGrafter"/>
</dbReference>
<dbReference type="GO" id="GO:0070181">
    <property type="term" value="F:small ribosomal subunit rRNA binding"/>
    <property type="evidence" value="ECO:0007669"/>
    <property type="project" value="TreeGrafter"/>
</dbReference>
<dbReference type="GO" id="GO:0003735">
    <property type="term" value="F:structural constituent of ribosome"/>
    <property type="evidence" value="ECO:0007669"/>
    <property type="project" value="InterPro"/>
</dbReference>
<dbReference type="GO" id="GO:0006412">
    <property type="term" value="P:translation"/>
    <property type="evidence" value="ECO:0007669"/>
    <property type="project" value="UniProtKB-UniRule"/>
</dbReference>
<dbReference type="FunFam" id="1.20.58.110:FF:000001">
    <property type="entry name" value="30S ribosomal protein S20"/>
    <property type="match status" value="1"/>
</dbReference>
<dbReference type="Gene3D" id="1.20.58.110">
    <property type="entry name" value="Ribosomal protein S20"/>
    <property type="match status" value="1"/>
</dbReference>
<dbReference type="HAMAP" id="MF_00500">
    <property type="entry name" value="Ribosomal_bS20"/>
    <property type="match status" value="1"/>
</dbReference>
<dbReference type="InterPro" id="IPR002583">
    <property type="entry name" value="Ribosomal_bS20"/>
</dbReference>
<dbReference type="InterPro" id="IPR036510">
    <property type="entry name" value="Ribosomal_bS20_sf"/>
</dbReference>
<dbReference type="NCBIfam" id="TIGR00029">
    <property type="entry name" value="S20"/>
    <property type="match status" value="1"/>
</dbReference>
<dbReference type="PANTHER" id="PTHR33398">
    <property type="entry name" value="30S RIBOSOMAL PROTEIN S20"/>
    <property type="match status" value="1"/>
</dbReference>
<dbReference type="PANTHER" id="PTHR33398:SF1">
    <property type="entry name" value="SMALL RIBOSOMAL SUBUNIT PROTEIN BS20C"/>
    <property type="match status" value="1"/>
</dbReference>
<dbReference type="Pfam" id="PF01649">
    <property type="entry name" value="Ribosomal_S20p"/>
    <property type="match status" value="1"/>
</dbReference>
<dbReference type="SUPFAM" id="SSF46992">
    <property type="entry name" value="Ribosomal protein S20"/>
    <property type="match status" value="1"/>
</dbReference>
<reference key="1">
    <citation type="submission" date="2008-12" db="EMBL/GenBank/DDBJ databases">
        <title>Complete sequence of chromosome of Shewanella baltica OS223.</title>
        <authorList>
            <consortium name="US DOE Joint Genome Institute"/>
            <person name="Lucas S."/>
            <person name="Copeland A."/>
            <person name="Lapidus A."/>
            <person name="Glavina del Rio T."/>
            <person name="Dalin E."/>
            <person name="Tice H."/>
            <person name="Bruce D."/>
            <person name="Goodwin L."/>
            <person name="Pitluck S."/>
            <person name="Chertkov O."/>
            <person name="Meincke L."/>
            <person name="Brettin T."/>
            <person name="Detter J.C."/>
            <person name="Han C."/>
            <person name="Kuske C.R."/>
            <person name="Larimer F."/>
            <person name="Land M."/>
            <person name="Hauser L."/>
            <person name="Kyrpides N."/>
            <person name="Ovchinnikova G."/>
            <person name="Brettar I."/>
            <person name="Rodrigues J."/>
            <person name="Konstantinidis K."/>
            <person name="Tiedje J."/>
        </authorList>
    </citation>
    <scope>NUCLEOTIDE SEQUENCE [LARGE SCALE GENOMIC DNA]</scope>
    <source>
        <strain>OS223</strain>
    </source>
</reference>
<proteinExistence type="inferred from homology"/>
<feature type="chain" id="PRO_1000194263" description="Small ribosomal subunit protein bS20">
    <location>
        <begin position="1"/>
        <end position="88"/>
    </location>
</feature>
<feature type="region of interest" description="Disordered" evidence="2">
    <location>
        <begin position="1"/>
        <end position="27"/>
    </location>
</feature>
<gene>
    <name evidence="1" type="primary">rpsT</name>
    <name type="ordered locus">Sbal223_3238</name>
</gene>
<evidence type="ECO:0000255" key="1">
    <source>
        <dbReference type="HAMAP-Rule" id="MF_00500"/>
    </source>
</evidence>
<evidence type="ECO:0000256" key="2">
    <source>
        <dbReference type="SAM" id="MobiDB-lite"/>
    </source>
</evidence>
<evidence type="ECO:0000305" key="3"/>
<protein>
    <recommendedName>
        <fullName evidence="1">Small ribosomal subunit protein bS20</fullName>
    </recommendedName>
    <alternativeName>
        <fullName evidence="3">30S ribosomal protein S20</fullName>
    </alternativeName>
</protein>
<sequence length="88" mass="9690">MANSKSAKKRALQSEKRRQHNASRRSMLRTYVKKVIAAIKAGDHKTAAEAFAVAQPIVDRMATKGLIHKNKAARQKARLNAKIKAIAA</sequence>
<organism>
    <name type="scientific">Shewanella baltica (strain OS223)</name>
    <dbReference type="NCBI Taxonomy" id="407976"/>
    <lineage>
        <taxon>Bacteria</taxon>
        <taxon>Pseudomonadati</taxon>
        <taxon>Pseudomonadota</taxon>
        <taxon>Gammaproteobacteria</taxon>
        <taxon>Alteromonadales</taxon>
        <taxon>Shewanellaceae</taxon>
        <taxon>Shewanella</taxon>
    </lineage>
</organism>
<accession>B8EFD0</accession>